<evidence type="ECO:0000250" key="1"/>
<evidence type="ECO:0000255" key="2">
    <source>
        <dbReference type="PROSITE-ProRule" id="PRU00448"/>
    </source>
</evidence>
<evidence type="ECO:0000269" key="3">
    <source>
    </source>
</evidence>
<evidence type="ECO:0000269" key="4">
    <source>
    </source>
</evidence>
<evidence type="ECO:0000305" key="5"/>
<organism>
    <name type="scientific">Drosophila melanogaster</name>
    <name type="common">Fruit fly</name>
    <dbReference type="NCBI Taxonomy" id="7227"/>
    <lineage>
        <taxon>Eukaryota</taxon>
        <taxon>Metazoa</taxon>
        <taxon>Ecdysozoa</taxon>
        <taxon>Arthropoda</taxon>
        <taxon>Hexapoda</taxon>
        <taxon>Insecta</taxon>
        <taxon>Pterygota</taxon>
        <taxon>Neoptera</taxon>
        <taxon>Endopterygota</taxon>
        <taxon>Diptera</taxon>
        <taxon>Brachycera</taxon>
        <taxon>Muscomorpha</taxon>
        <taxon>Ephydroidea</taxon>
        <taxon>Drosophilidae</taxon>
        <taxon>Drosophila</taxon>
        <taxon>Sophophora</taxon>
    </lineage>
</organism>
<feature type="chain" id="PRO_0000073489" description="Calcineurin subunit B type 2">
    <location>
        <begin position="1"/>
        <end position="170"/>
    </location>
</feature>
<feature type="domain" description="EF-hand 1" evidence="2">
    <location>
        <begin position="18"/>
        <end position="46"/>
    </location>
</feature>
<feature type="domain" description="EF-hand 2" evidence="2">
    <location>
        <begin position="50"/>
        <end position="85"/>
    </location>
</feature>
<feature type="domain" description="EF-hand 3" evidence="2">
    <location>
        <begin position="87"/>
        <end position="122"/>
    </location>
</feature>
<feature type="domain" description="EF-hand 4" evidence="2">
    <location>
        <begin position="128"/>
        <end position="163"/>
    </location>
</feature>
<feature type="binding site" evidence="2">
    <location>
        <position position="31"/>
    </location>
    <ligand>
        <name>Ca(2+)</name>
        <dbReference type="ChEBI" id="CHEBI:29108"/>
        <label>1</label>
    </ligand>
</feature>
<feature type="binding site" evidence="2">
    <location>
        <position position="33"/>
    </location>
    <ligand>
        <name>Ca(2+)</name>
        <dbReference type="ChEBI" id="CHEBI:29108"/>
        <label>1</label>
    </ligand>
</feature>
<feature type="binding site" evidence="2">
    <location>
        <position position="35"/>
    </location>
    <ligand>
        <name>Ca(2+)</name>
        <dbReference type="ChEBI" id="CHEBI:29108"/>
        <label>1</label>
    </ligand>
</feature>
<feature type="binding site" evidence="2">
    <location>
        <position position="42"/>
    </location>
    <ligand>
        <name>Ca(2+)</name>
        <dbReference type="ChEBI" id="CHEBI:29108"/>
        <label>1</label>
    </ligand>
</feature>
<feature type="binding site" evidence="2">
    <location>
        <position position="63"/>
    </location>
    <ligand>
        <name>Ca(2+)</name>
        <dbReference type="ChEBI" id="CHEBI:29108"/>
        <label>2</label>
    </ligand>
</feature>
<feature type="binding site" evidence="2">
    <location>
        <position position="65"/>
    </location>
    <ligand>
        <name>Ca(2+)</name>
        <dbReference type="ChEBI" id="CHEBI:29108"/>
        <label>2</label>
    </ligand>
</feature>
<feature type="binding site" evidence="2">
    <location>
        <position position="67"/>
    </location>
    <ligand>
        <name>Ca(2+)</name>
        <dbReference type="ChEBI" id="CHEBI:29108"/>
        <label>2</label>
    </ligand>
</feature>
<feature type="binding site" evidence="2">
    <location>
        <position position="69"/>
    </location>
    <ligand>
        <name>Ca(2+)</name>
        <dbReference type="ChEBI" id="CHEBI:29108"/>
        <label>2</label>
    </ligand>
</feature>
<feature type="binding site" evidence="2">
    <location>
        <position position="74"/>
    </location>
    <ligand>
        <name>Ca(2+)</name>
        <dbReference type="ChEBI" id="CHEBI:29108"/>
        <label>2</label>
    </ligand>
</feature>
<feature type="binding site" evidence="2">
    <location>
        <position position="100"/>
    </location>
    <ligand>
        <name>Ca(2+)</name>
        <dbReference type="ChEBI" id="CHEBI:29108"/>
        <label>3</label>
    </ligand>
</feature>
<feature type="binding site" evidence="2">
    <location>
        <position position="102"/>
    </location>
    <ligand>
        <name>Ca(2+)</name>
        <dbReference type="ChEBI" id="CHEBI:29108"/>
        <label>3</label>
    </ligand>
</feature>
<feature type="binding site" evidence="2">
    <location>
        <position position="104"/>
    </location>
    <ligand>
        <name>Ca(2+)</name>
        <dbReference type="ChEBI" id="CHEBI:29108"/>
        <label>3</label>
    </ligand>
</feature>
<feature type="binding site" evidence="2">
    <location>
        <position position="106"/>
    </location>
    <ligand>
        <name>Ca(2+)</name>
        <dbReference type="ChEBI" id="CHEBI:29108"/>
        <label>3</label>
    </ligand>
</feature>
<feature type="binding site" evidence="2">
    <location>
        <position position="111"/>
    </location>
    <ligand>
        <name>Ca(2+)</name>
        <dbReference type="ChEBI" id="CHEBI:29108"/>
        <label>3</label>
    </ligand>
</feature>
<feature type="binding site" evidence="2">
    <location>
        <position position="141"/>
    </location>
    <ligand>
        <name>Ca(2+)</name>
        <dbReference type="ChEBI" id="CHEBI:29108"/>
        <label>4</label>
    </ligand>
</feature>
<feature type="binding site" evidence="2">
    <location>
        <position position="143"/>
    </location>
    <ligand>
        <name>Ca(2+)</name>
        <dbReference type="ChEBI" id="CHEBI:29108"/>
        <label>4</label>
    </ligand>
</feature>
<feature type="binding site" evidence="2">
    <location>
        <position position="145"/>
    </location>
    <ligand>
        <name>Ca(2+)</name>
        <dbReference type="ChEBI" id="CHEBI:29108"/>
        <label>4</label>
    </ligand>
</feature>
<feature type="binding site" evidence="2">
    <location>
        <position position="147"/>
    </location>
    <ligand>
        <name>Ca(2+)</name>
        <dbReference type="ChEBI" id="CHEBI:29108"/>
        <label>4</label>
    </ligand>
</feature>
<feature type="binding site" evidence="2">
    <location>
        <position position="152"/>
    </location>
    <ligand>
        <name>Ca(2+)</name>
        <dbReference type="ChEBI" id="CHEBI:29108"/>
        <label>4</label>
    </ligand>
</feature>
<feature type="modified residue" description="Phosphoserine" evidence="3">
    <location>
        <position position="35"/>
    </location>
</feature>
<keyword id="KW-0106">Calcium</keyword>
<keyword id="KW-0479">Metal-binding</keyword>
<keyword id="KW-0597">Phosphoprotein</keyword>
<keyword id="KW-1185">Reference proteome</keyword>
<keyword id="KW-0677">Repeat</keyword>
<accession>Q24214</accession>
<accession>Q9V315</accession>
<sequence>MGNETSLPMEMCSNFDADEIRRLGKRFRKLDLDNSGALSVDEFMSLPELQQNPLVQRVIDIFDADGNGEVDFKEFIQGVSQFSVKGDKLSKLRFAFRIYDMDNDGYISNGELFQVLKMMVGNNLKDTQLQQIVDKTIGFADKDEDGKISFDEFCSVVGNTDIHKKMVVDV</sequence>
<comment type="function">
    <text evidence="1">Calcineurin is a calcium-binding and calmodulin-binding protein found in all cells from yeast to mammals, and a calcium-dependent, calmodulin-stimulated protein phosphatase.</text>
</comment>
<comment type="subunit">
    <text evidence="1 4">Composed of a catalytic subunit (A) and a regulatory subunit (B) (By similarity). Interacts with sra.</text>
</comment>
<comment type="miscellaneous">
    <text>This protein has four functional calcium-binding sites.</text>
</comment>
<comment type="similarity">
    <text evidence="5">Belongs to the calcineurin regulatory subunit family.</text>
</comment>
<proteinExistence type="evidence at protein level"/>
<dbReference type="EMBL" id="U56245">
    <property type="protein sequence ID" value="AAC47350.1"/>
    <property type="molecule type" value="Genomic_DNA"/>
</dbReference>
<dbReference type="EMBL" id="AE013599">
    <property type="protein sequence ID" value="AAF59195.2"/>
    <property type="molecule type" value="Genomic_DNA"/>
</dbReference>
<dbReference type="EMBL" id="AY089602">
    <property type="protein sequence ID" value="AAL90340.1"/>
    <property type="molecule type" value="mRNA"/>
</dbReference>
<dbReference type="EMBL" id="BT003768">
    <property type="protein sequence ID" value="AAO41447.1"/>
    <property type="molecule type" value="mRNA"/>
</dbReference>
<dbReference type="PIR" id="JC5174">
    <property type="entry name" value="JC5174"/>
</dbReference>
<dbReference type="RefSeq" id="NP_001246192.1">
    <property type="nucleotide sequence ID" value="NM_001259263.2"/>
</dbReference>
<dbReference type="RefSeq" id="NP_524874.2">
    <property type="nucleotide sequence ID" value="NM_080135.4"/>
</dbReference>
<dbReference type="SMR" id="Q24214"/>
<dbReference type="BioGRID" id="70250">
    <property type="interactions" value="5"/>
</dbReference>
<dbReference type="FunCoup" id="Q24214">
    <property type="interactions" value="1940"/>
</dbReference>
<dbReference type="IntAct" id="Q24214">
    <property type="interactions" value="4"/>
</dbReference>
<dbReference type="STRING" id="7227.FBpp0301600"/>
<dbReference type="iPTMnet" id="Q24214"/>
<dbReference type="PaxDb" id="7227-FBpp0301600"/>
<dbReference type="DNASU" id="46456"/>
<dbReference type="EnsemblMetazoa" id="FBtr0088930">
    <property type="protein sequence ID" value="FBpp0088004"/>
    <property type="gene ID" value="FBgn0015614"/>
</dbReference>
<dbReference type="EnsemblMetazoa" id="FBtr0309866">
    <property type="protein sequence ID" value="FBpp0301600"/>
    <property type="gene ID" value="FBgn0015614"/>
</dbReference>
<dbReference type="GeneID" id="46456"/>
<dbReference type="KEGG" id="dme:Dmel_CG11217"/>
<dbReference type="AGR" id="FB:FBgn0015614"/>
<dbReference type="CTD" id="46456"/>
<dbReference type="FlyBase" id="FBgn0015614">
    <property type="gene designation" value="CanB2"/>
</dbReference>
<dbReference type="VEuPathDB" id="VectorBase:FBgn0015614"/>
<dbReference type="eggNOG" id="KOG0034">
    <property type="taxonomic scope" value="Eukaryota"/>
</dbReference>
<dbReference type="GeneTree" id="ENSGT00940000156530"/>
<dbReference type="HOGENOM" id="CLU_061288_10_1_1"/>
<dbReference type="InParanoid" id="Q24214"/>
<dbReference type="OMA" id="DTNFDRD"/>
<dbReference type="OrthoDB" id="191686at2759"/>
<dbReference type="PhylomeDB" id="Q24214"/>
<dbReference type="Reactome" id="R-DME-2025928">
    <property type="pathway name" value="Calcineurin activates NFAT"/>
</dbReference>
<dbReference type="Reactome" id="R-DME-2871809">
    <property type="pathway name" value="FCERI mediated Ca+2 mobilization"/>
</dbReference>
<dbReference type="Reactome" id="R-DME-4086398">
    <property type="pathway name" value="Ca2+ pathway"/>
</dbReference>
<dbReference type="Reactome" id="R-DME-5607763">
    <property type="pathway name" value="CLEC7A (Dectin-1) induces NFAT activation"/>
</dbReference>
<dbReference type="SignaLink" id="Q24214"/>
<dbReference type="BioGRID-ORCS" id="46456">
    <property type="hits" value="0 hits in 3 CRISPR screens"/>
</dbReference>
<dbReference type="GenomeRNAi" id="46456"/>
<dbReference type="PRO" id="PR:Q24214"/>
<dbReference type="Proteomes" id="UP000000803">
    <property type="component" value="Chromosome 2R"/>
</dbReference>
<dbReference type="Bgee" id="FBgn0015614">
    <property type="expression patterns" value="Expressed in adult oenocyte (Drosophila) in body wall and 273 other cell types or tissues"/>
</dbReference>
<dbReference type="ExpressionAtlas" id="Q24214">
    <property type="expression patterns" value="baseline and differential"/>
</dbReference>
<dbReference type="GO" id="GO:0005955">
    <property type="term" value="C:calcineurin complex"/>
    <property type="evidence" value="ECO:0000250"/>
    <property type="project" value="FlyBase"/>
</dbReference>
<dbReference type="GO" id="GO:0008021">
    <property type="term" value="C:synaptic vesicle"/>
    <property type="evidence" value="ECO:0000303"/>
    <property type="project" value="FlyBase"/>
</dbReference>
<dbReference type="GO" id="GO:0005509">
    <property type="term" value="F:calcium ion binding"/>
    <property type="evidence" value="ECO:0000250"/>
    <property type="project" value="FlyBase"/>
</dbReference>
<dbReference type="GO" id="GO:0008597">
    <property type="term" value="F:calcium-dependent protein serine/threonine phosphatase regulator activity"/>
    <property type="evidence" value="ECO:0000250"/>
    <property type="project" value="FlyBase"/>
</dbReference>
<dbReference type="GO" id="GO:0005516">
    <property type="term" value="F:calmodulin binding"/>
    <property type="evidence" value="ECO:0000250"/>
    <property type="project" value="FlyBase"/>
</dbReference>
<dbReference type="GO" id="GO:0019902">
    <property type="term" value="F:phosphatase binding"/>
    <property type="evidence" value="ECO:0000318"/>
    <property type="project" value="GO_Central"/>
</dbReference>
<dbReference type="GO" id="GO:0097720">
    <property type="term" value="P:calcineurin-mediated signaling"/>
    <property type="evidence" value="ECO:0000318"/>
    <property type="project" value="GO_Central"/>
</dbReference>
<dbReference type="GO" id="GO:0051321">
    <property type="term" value="P:meiotic cell cycle"/>
    <property type="evidence" value="ECO:0000315"/>
    <property type="project" value="FlyBase"/>
</dbReference>
<dbReference type="GO" id="GO:0007269">
    <property type="term" value="P:neurotransmitter secretion"/>
    <property type="evidence" value="ECO:0000303"/>
    <property type="project" value="FlyBase"/>
</dbReference>
<dbReference type="GO" id="GO:0045214">
    <property type="term" value="P:sarcomere organization"/>
    <property type="evidence" value="ECO:0000315"/>
    <property type="project" value="FlyBase"/>
</dbReference>
<dbReference type="GO" id="GO:0030431">
    <property type="term" value="P:sleep"/>
    <property type="evidence" value="ECO:0000314"/>
    <property type="project" value="FlyBase"/>
</dbReference>
<dbReference type="GO" id="GO:0016192">
    <property type="term" value="P:vesicle-mediated transport"/>
    <property type="evidence" value="ECO:0000303"/>
    <property type="project" value="FlyBase"/>
</dbReference>
<dbReference type="CDD" id="cd00051">
    <property type="entry name" value="EFh"/>
    <property type="match status" value="1"/>
</dbReference>
<dbReference type="FunFam" id="1.10.238.10:FF:000047">
    <property type="entry name" value="Calcineurin subunit B type 1"/>
    <property type="match status" value="1"/>
</dbReference>
<dbReference type="Gene3D" id="1.10.238.10">
    <property type="entry name" value="EF-hand"/>
    <property type="match status" value="1"/>
</dbReference>
<dbReference type="InterPro" id="IPR011992">
    <property type="entry name" value="EF-hand-dom_pair"/>
</dbReference>
<dbReference type="InterPro" id="IPR018247">
    <property type="entry name" value="EF_Hand_1_Ca_BS"/>
</dbReference>
<dbReference type="InterPro" id="IPR002048">
    <property type="entry name" value="EF_hand_dom"/>
</dbReference>
<dbReference type="PANTHER" id="PTHR45942">
    <property type="entry name" value="PROTEIN PHOSPATASE 3 REGULATORY SUBUNIT B ALPHA ISOFORM TYPE 1"/>
    <property type="match status" value="1"/>
</dbReference>
<dbReference type="Pfam" id="PF13499">
    <property type="entry name" value="EF-hand_7"/>
    <property type="match status" value="2"/>
</dbReference>
<dbReference type="SMART" id="SM00054">
    <property type="entry name" value="EFh"/>
    <property type="match status" value="4"/>
</dbReference>
<dbReference type="SUPFAM" id="SSF47473">
    <property type="entry name" value="EF-hand"/>
    <property type="match status" value="1"/>
</dbReference>
<dbReference type="PROSITE" id="PS00018">
    <property type="entry name" value="EF_HAND_1"/>
    <property type="match status" value="4"/>
</dbReference>
<dbReference type="PROSITE" id="PS50222">
    <property type="entry name" value="EF_HAND_2"/>
    <property type="match status" value="4"/>
</dbReference>
<protein>
    <recommendedName>
        <fullName>Calcineurin subunit B type 2</fullName>
    </recommendedName>
    <alternativeName>
        <fullName>Protein phosphatase 2B regulatory subunit 2</fullName>
    </alternativeName>
    <alternativeName>
        <fullName>dCNB2</fullName>
    </alternativeName>
</protein>
<reference key="1">
    <citation type="journal article" date="1996" name="Gene">
        <title>Drosophila melanogaster contains both X-linked and autosomal homologues of the gene encoding calcineurin B.</title>
        <authorList>
            <person name="Warren W.D."/>
            <person name="Phillips A.M."/>
            <person name="Howells A.J."/>
        </authorList>
    </citation>
    <scope>NUCLEOTIDE SEQUENCE [GENOMIC DNA]</scope>
    <source>
        <strain>Canton-S</strain>
    </source>
</reference>
<reference key="2">
    <citation type="journal article" date="2000" name="Science">
        <title>The genome sequence of Drosophila melanogaster.</title>
        <authorList>
            <person name="Adams M.D."/>
            <person name="Celniker S.E."/>
            <person name="Holt R.A."/>
            <person name="Evans C.A."/>
            <person name="Gocayne J.D."/>
            <person name="Amanatides P.G."/>
            <person name="Scherer S.E."/>
            <person name="Li P.W."/>
            <person name="Hoskins R.A."/>
            <person name="Galle R.F."/>
            <person name="George R.A."/>
            <person name="Lewis S.E."/>
            <person name="Richards S."/>
            <person name="Ashburner M."/>
            <person name="Henderson S.N."/>
            <person name="Sutton G.G."/>
            <person name="Wortman J.R."/>
            <person name="Yandell M.D."/>
            <person name="Zhang Q."/>
            <person name="Chen L.X."/>
            <person name="Brandon R.C."/>
            <person name="Rogers Y.-H.C."/>
            <person name="Blazej R.G."/>
            <person name="Champe M."/>
            <person name="Pfeiffer B.D."/>
            <person name="Wan K.H."/>
            <person name="Doyle C."/>
            <person name="Baxter E.G."/>
            <person name="Helt G."/>
            <person name="Nelson C.R."/>
            <person name="Miklos G.L.G."/>
            <person name="Abril J.F."/>
            <person name="Agbayani A."/>
            <person name="An H.-J."/>
            <person name="Andrews-Pfannkoch C."/>
            <person name="Baldwin D."/>
            <person name="Ballew R.M."/>
            <person name="Basu A."/>
            <person name="Baxendale J."/>
            <person name="Bayraktaroglu L."/>
            <person name="Beasley E.M."/>
            <person name="Beeson K.Y."/>
            <person name="Benos P.V."/>
            <person name="Berman B.P."/>
            <person name="Bhandari D."/>
            <person name="Bolshakov S."/>
            <person name="Borkova D."/>
            <person name="Botchan M.R."/>
            <person name="Bouck J."/>
            <person name="Brokstein P."/>
            <person name="Brottier P."/>
            <person name="Burtis K.C."/>
            <person name="Busam D.A."/>
            <person name="Butler H."/>
            <person name="Cadieu E."/>
            <person name="Center A."/>
            <person name="Chandra I."/>
            <person name="Cherry J.M."/>
            <person name="Cawley S."/>
            <person name="Dahlke C."/>
            <person name="Davenport L.B."/>
            <person name="Davies P."/>
            <person name="de Pablos B."/>
            <person name="Delcher A."/>
            <person name="Deng Z."/>
            <person name="Mays A.D."/>
            <person name="Dew I."/>
            <person name="Dietz S.M."/>
            <person name="Dodson K."/>
            <person name="Doup L.E."/>
            <person name="Downes M."/>
            <person name="Dugan-Rocha S."/>
            <person name="Dunkov B.C."/>
            <person name="Dunn P."/>
            <person name="Durbin K.J."/>
            <person name="Evangelista C.C."/>
            <person name="Ferraz C."/>
            <person name="Ferriera S."/>
            <person name="Fleischmann W."/>
            <person name="Fosler C."/>
            <person name="Gabrielian A.E."/>
            <person name="Garg N.S."/>
            <person name="Gelbart W.M."/>
            <person name="Glasser K."/>
            <person name="Glodek A."/>
            <person name="Gong F."/>
            <person name="Gorrell J.H."/>
            <person name="Gu Z."/>
            <person name="Guan P."/>
            <person name="Harris M."/>
            <person name="Harris N.L."/>
            <person name="Harvey D.A."/>
            <person name="Heiman T.J."/>
            <person name="Hernandez J.R."/>
            <person name="Houck J."/>
            <person name="Hostin D."/>
            <person name="Houston K.A."/>
            <person name="Howland T.J."/>
            <person name="Wei M.-H."/>
            <person name="Ibegwam C."/>
            <person name="Jalali M."/>
            <person name="Kalush F."/>
            <person name="Karpen G.H."/>
            <person name="Ke Z."/>
            <person name="Kennison J.A."/>
            <person name="Ketchum K.A."/>
            <person name="Kimmel B.E."/>
            <person name="Kodira C.D."/>
            <person name="Kraft C.L."/>
            <person name="Kravitz S."/>
            <person name="Kulp D."/>
            <person name="Lai Z."/>
            <person name="Lasko P."/>
            <person name="Lei Y."/>
            <person name="Levitsky A.A."/>
            <person name="Li J.H."/>
            <person name="Li Z."/>
            <person name="Liang Y."/>
            <person name="Lin X."/>
            <person name="Liu X."/>
            <person name="Mattei B."/>
            <person name="McIntosh T.C."/>
            <person name="McLeod M.P."/>
            <person name="McPherson D."/>
            <person name="Merkulov G."/>
            <person name="Milshina N.V."/>
            <person name="Mobarry C."/>
            <person name="Morris J."/>
            <person name="Moshrefi A."/>
            <person name="Mount S.M."/>
            <person name="Moy M."/>
            <person name="Murphy B."/>
            <person name="Murphy L."/>
            <person name="Muzny D.M."/>
            <person name="Nelson D.L."/>
            <person name="Nelson D.R."/>
            <person name="Nelson K.A."/>
            <person name="Nixon K."/>
            <person name="Nusskern D.R."/>
            <person name="Pacleb J.M."/>
            <person name="Palazzolo M."/>
            <person name="Pittman G.S."/>
            <person name="Pan S."/>
            <person name="Pollard J."/>
            <person name="Puri V."/>
            <person name="Reese M.G."/>
            <person name="Reinert K."/>
            <person name="Remington K."/>
            <person name="Saunders R.D.C."/>
            <person name="Scheeler F."/>
            <person name="Shen H."/>
            <person name="Shue B.C."/>
            <person name="Siden-Kiamos I."/>
            <person name="Simpson M."/>
            <person name="Skupski M.P."/>
            <person name="Smith T.J."/>
            <person name="Spier E."/>
            <person name="Spradling A.C."/>
            <person name="Stapleton M."/>
            <person name="Strong R."/>
            <person name="Sun E."/>
            <person name="Svirskas R."/>
            <person name="Tector C."/>
            <person name="Turner R."/>
            <person name="Venter E."/>
            <person name="Wang A.H."/>
            <person name="Wang X."/>
            <person name="Wang Z.-Y."/>
            <person name="Wassarman D.A."/>
            <person name="Weinstock G.M."/>
            <person name="Weissenbach J."/>
            <person name="Williams S.M."/>
            <person name="Woodage T."/>
            <person name="Worley K.C."/>
            <person name="Wu D."/>
            <person name="Yang S."/>
            <person name="Yao Q.A."/>
            <person name="Ye J."/>
            <person name="Yeh R.-F."/>
            <person name="Zaveri J.S."/>
            <person name="Zhan M."/>
            <person name="Zhang G."/>
            <person name="Zhao Q."/>
            <person name="Zheng L."/>
            <person name="Zheng X.H."/>
            <person name="Zhong F.N."/>
            <person name="Zhong W."/>
            <person name="Zhou X."/>
            <person name="Zhu S.C."/>
            <person name="Zhu X."/>
            <person name="Smith H.O."/>
            <person name="Gibbs R.A."/>
            <person name="Myers E.W."/>
            <person name="Rubin G.M."/>
            <person name="Venter J.C."/>
        </authorList>
    </citation>
    <scope>NUCLEOTIDE SEQUENCE [LARGE SCALE GENOMIC DNA]</scope>
    <source>
        <strain>Berkeley</strain>
    </source>
</reference>
<reference key="3">
    <citation type="journal article" date="2002" name="Genome Biol.">
        <title>Annotation of the Drosophila melanogaster euchromatic genome: a systematic review.</title>
        <authorList>
            <person name="Misra S."/>
            <person name="Crosby M.A."/>
            <person name="Mungall C.J."/>
            <person name="Matthews B.B."/>
            <person name="Campbell K.S."/>
            <person name="Hradecky P."/>
            <person name="Huang Y."/>
            <person name="Kaminker J.S."/>
            <person name="Millburn G.H."/>
            <person name="Prochnik S.E."/>
            <person name="Smith C.D."/>
            <person name="Tupy J.L."/>
            <person name="Whitfield E.J."/>
            <person name="Bayraktaroglu L."/>
            <person name="Berman B.P."/>
            <person name="Bettencourt B.R."/>
            <person name="Celniker S.E."/>
            <person name="de Grey A.D.N.J."/>
            <person name="Drysdale R.A."/>
            <person name="Harris N.L."/>
            <person name="Richter J."/>
            <person name="Russo S."/>
            <person name="Schroeder A.J."/>
            <person name="Shu S.Q."/>
            <person name="Stapleton M."/>
            <person name="Yamada C."/>
            <person name="Ashburner M."/>
            <person name="Gelbart W.M."/>
            <person name="Rubin G.M."/>
            <person name="Lewis S.E."/>
        </authorList>
    </citation>
    <scope>GENOME REANNOTATION</scope>
    <source>
        <strain>Berkeley</strain>
    </source>
</reference>
<reference key="4">
    <citation type="journal article" date="2002" name="Genome Biol.">
        <title>A Drosophila full-length cDNA resource.</title>
        <authorList>
            <person name="Stapleton M."/>
            <person name="Carlson J.W."/>
            <person name="Brokstein P."/>
            <person name="Yu C."/>
            <person name="Champe M."/>
            <person name="George R.A."/>
            <person name="Guarin H."/>
            <person name="Kronmiller B."/>
            <person name="Pacleb J.M."/>
            <person name="Park S."/>
            <person name="Wan K.H."/>
            <person name="Rubin G.M."/>
            <person name="Celniker S.E."/>
        </authorList>
    </citation>
    <scope>NUCLEOTIDE SEQUENCE [LARGE SCALE MRNA]</scope>
    <source>
        <strain>Berkeley</strain>
        <tissue>Embryo</tissue>
    </source>
</reference>
<reference key="5">
    <citation type="submission" date="2003-02" db="EMBL/GenBank/DDBJ databases">
        <authorList>
            <person name="Stapleton M."/>
            <person name="Brokstein P."/>
            <person name="Hong L."/>
            <person name="Agbayani A."/>
            <person name="Carlson J.W."/>
            <person name="Champe M."/>
            <person name="Chavez C."/>
            <person name="Dorsett V."/>
            <person name="Dresnek D."/>
            <person name="Farfan D."/>
            <person name="Frise E."/>
            <person name="George R.A."/>
            <person name="Gonzalez M."/>
            <person name="Guarin H."/>
            <person name="Kronmiller B."/>
            <person name="Li P.W."/>
            <person name="Liao G."/>
            <person name="Miranda A."/>
            <person name="Mungall C.J."/>
            <person name="Nunoo J."/>
            <person name="Pacleb J.M."/>
            <person name="Paragas V."/>
            <person name="Park S."/>
            <person name="Patel S."/>
            <person name="Phouanenavong S."/>
            <person name="Wan K.H."/>
            <person name="Yu C."/>
            <person name="Lewis S.E."/>
            <person name="Rubin G.M."/>
            <person name="Celniker S.E."/>
        </authorList>
    </citation>
    <scope>NUCLEOTIDE SEQUENCE [LARGE SCALE MRNA]</scope>
    <source>
        <strain>Berkeley</strain>
        <tissue>Embryo</tissue>
    </source>
</reference>
<reference key="6">
    <citation type="journal article" date="2008" name="J. Proteome Res.">
        <title>Phosphoproteome analysis of Drosophila melanogaster embryos.</title>
        <authorList>
            <person name="Zhai B."/>
            <person name="Villen J."/>
            <person name="Beausoleil S.A."/>
            <person name="Mintseris J."/>
            <person name="Gygi S.P."/>
        </authorList>
    </citation>
    <scope>PHOSPHORYLATION [LARGE SCALE ANALYSIS] AT SER-35</scope>
    <scope>IDENTIFICATION BY MASS SPECTROMETRY</scope>
    <source>
        <tissue>Embryo</tissue>
    </source>
</reference>
<reference key="7">
    <citation type="journal article" date="2012" name="Proc. Natl. Acad. Sci. U.S.A.">
        <title>Shaggy/glycogen synthase kinase 3beta and phosphorylation of Sarah/regulator of calcineurin are essential for completion of Drosophila female meiosis.</title>
        <authorList>
            <person name="Takeo S."/>
            <person name="Swanson S.K."/>
            <person name="Nandanan K."/>
            <person name="Nakai Y."/>
            <person name="Aigaki T."/>
            <person name="Washburn M.P."/>
            <person name="Florens L."/>
            <person name="Hawley R.S."/>
        </authorList>
    </citation>
    <scope>INTERACTION WITH SRA</scope>
</reference>
<gene>
    <name type="primary">CanB2</name>
    <name type="synonym">CNB2</name>
    <name type="ORF">CG11217</name>
</gene>
<name>CANB2_DROME</name>